<evidence type="ECO:0000250" key="1">
    <source>
        <dbReference type="UniProtKB" id="Q00916"/>
    </source>
</evidence>
<evidence type="ECO:0000255" key="2">
    <source>
        <dbReference type="PROSITE-ProRule" id="PRU00176"/>
    </source>
</evidence>
<evidence type="ECO:0000256" key="3">
    <source>
        <dbReference type="SAM" id="MobiDB-lite"/>
    </source>
</evidence>
<evidence type="ECO:0000269" key="4">
    <source>
    </source>
</evidence>
<evidence type="ECO:0000269" key="5">
    <source>
    </source>
</evidence>
<evidence type="ECO:0000305" key="6"/>
<evidence type="ECO:0000312" key="7">
    <source>
        <dbReference type="EMBL" id="CAB11649.1"/>
    </source>
</evidence>
<keyword id="KW-0507">mRNA processing</keyword>
<keyword id="KW-0508">mRNA splicing</keyword>
<keyword id="KW-0539">Nucleus</keyword>
<keyword id="KW-1185">Reference proteome</keyword>
<keyword id="KW-0687">Ribonucleoprotein</keyword>
<keyword id="KW-0694">RNA-binding</keyword>
<keyword id="KW-0747">Spliceosome</keyword>
<dbReference type="EMBL" id="CU329670">
    <property type="protein sequence ID" value="CAB11649.1"/>
    <property type="molecule type" value="Genomic_DNA"/>
</dbReference>
<dbReference type="PIR" id="T37948">
    <property type="entry name" value="T37948"/>
</dbReference>
<dbReference type="RefSeq" id="NP_593779.1">
    <property type="nucleotide sequence ID" value="NM_001019208.2"/>
</dbReference>
<dbReference type="SMR" id="O13829"/>
<dbReference type="BioGRID" id="278922">
    <property type="interactions" value="28"/>
</dbReference>
<dbReference type="DIP" id="DIP-59803N"/>
<dbReference type="FunCoup" id="O13829">
    <property type="interactions" value="252"/>
</dbReference>
<dbReference type="IntAct" id="O13829">
    <property type="interactions" value="1"/>
</dbReference>
<dbReference type="STRING" id="284812.O13829"/>
<dbReference type="iPTMnet" id="O13829"/>
<dbReference type="PaxDb" id="4896-SPAC19A8.13.1"/>
<dbReference type="EnsemblFungi" id="SPAC19A8.13.1">
    <property type="protein sequence ID" value="SPAC19A8.13.1:pep"/>
    <property type="gene ID" value="SPAC19A8.13"/>
</dbReference>
<dbReference type="GeneID" id="2542461"/>
<dbReference type="KEGG" id="spo:2542461"/>
<dbReference type="PomBase" id="SPAC19A8.13">
    <property type="gene designation" value="usp101"/>
</dbReference>
<dbReference type="VEuPathDB" id="FungiDB:SPAC19A8.13"/>
<dbReference type="eggNOG" id="KOG0113">
    <property type="taxonomic scope" value="Eukaryota"/>
</dbReference>
<dbReference type="HOGENOM" id="CLU_045151_4_1_1"/>
<dbReference type="InParanoid" id="O13829"/>
<dbReference type="OMA" id="PPKFYDG"/>
<dbReference type="PhylomeDB" id="O13829"/>
<dbReference type="PRO" id="PR:O13829"/>
<dbReference type="Proteomes" id="UP000002485">
    <property type="component" value="Chromosome I"/>
</dbReference>
<dbReference type="GO" id="GO:0000243">
    <property type="term" value="C:commitment complex"/>
    <property type="evidence" value="ECO:0000266"/>
    <property type="project" value="PomBase"/>
</dbReference>
<dbReference type="GO" id="GO:0005829">
    <property type="term" value="C:cytosol"/>
    <property type="evidence" value="ECO:0007005"/>
    <property type="project" value="PomBase"/>
</dbReference>
<dbReference type="GO" id="GO:0005634">
    <property type="term" value="C:nucleus"/>
    <property type="evidence" value="ECO:0007005"/>
    <property type="project" value="PomBase"/>
</dbReference>
<dbReference type="GO" id="GO:0005685">
    <property type="term" value="C:U1 snRNP"/>
    <property type="evidence" value="ECO:0000314"/>
    <property type="project" value="PomBase"/>
</dbReference>
<dbReference type="GO" id="GO:0071004">
    <property type="term" value="C:U2-type prespliceosome"/>
    <property type="evidence" value="ECO:0000318"/>
    <property type="project" value="GO_Central"/>
</dbReference>
<dbReference type="GO" id="GO:0003729">
    <property type="term" value="F:mRNA binding"/>
    <property type="evidence" value="ECO:0000318"/>
    <property type="project" value="GO_Central"/>
</dbReference>
<dbReference type="GO" id="GO:0030619">
    <property type="term" value="F:U1 snRNA binding"/>
    <property type="evidence" value="ECO:0000318"/>
    <property type="project" value="GO_Central"/>
</dbReference>
<dbReference type="GO" id="GO:0000395">
    <property type="term" value="P:mRNA 5'-splice site recognition"/>
    <property type="evidence" value="ECO:0000266"/>
    <property type="project" value="PomBase"/>
</dbReference>
<dbReference type="GO" id="GO:0000398">
    <property type="term" value="P:mRNA splicing, via spliceosome"/>
    <property type="evidence" value="ECO:0000318"/>
    <property type="project" value="GO_Central"/>
</dbReference>
<dbReference type="CDD" id="cd12236">
    <property type="entry name" value="RRM_snRNP70"/>
    <property type="match status" value="1"/>
</dbReference>
<dbReference type="FunFam" id="3.30.70.330:FF:000132">
    <property type="entry name" value="Small nuclear ribonucleoprotein U11/U12 subunit 35"/>
    <property type="match status" value="1"/>
</dbReference>
<dbReference type="Gene3D" id="3.30.70.330">
    <property type="match status" value="1"/>
</dbReference>
<dbReference type="InterPro" id="IPR012677">
    <property type="entry name" value="Nucleotide-bd_a/b_plait_sf"/>
</dbReference>
<dbReference type="InterPro" id="IPR035979">
    <property type="entry name" value="RBD_domain_sf"/>
</dbReference>
<dbReference type="InterPro" id="IPR000504">
    <property type="entry name" value="RRM_dom"/>
</dbReference>
<dbReference type="InterPro" id="IPR034143">
    <property type="entry name" value="snRNP70_RRM"/>
</dbReference>
<dbReference type="InterPro" id="IPR051183">
    <property type="entry name" value="U1_U11-U12_snRNP_70-35kDa"/>
</dbReference>
<dbReference type="InterPro" id="IPR022023">
    <property type="entry name" value="U1snRNP70_N"/>
</dbReference>
<dbReference type="PANTHER" id="PTHR13952">
    <property type="entry name" value="U1 SMALL NUCLEAR RIBONUCLEOPROTEIN 70 KD"/>
    <property type="match status" value="1"/>
</dbReference>
<dbReference type="PANTHER" id="PTHR13952:SF5">
    <property type="entry name" value="U1 SMALL NUCLEAR RIBONUCLEOPROTEIN 70 KDA"/>
    <property type="match status" value="1"/>
</dbReference>
<dbReference type="Pfam" id="PF00076">
    <property type="entry name" value="RRM_1"/>
    <property type="match status" value="1"/>
</dbReference>
<dbReference type="Pfam" id="PF12220">
    <property type="entry name" value="U1snRNP70_N"/>
    <property type="match status" value="1"/>
</dbReference>
<dbReference type="SMART" id="SM00360">
    <property type="entry name" value="RRM"/>
    <property type="match status" value="1"/>
</dbReference>
<dbReference type="SUPFAM" id="SSF54928">
    <property type="entry name" value="RNA-binding domain, RBD"/>
    <property type="match status" value="1"/>
</dbReference>
<dbReference type="PROSITE" id="PS50102">
    <property type="entry name" value="RRM"/>
    <property type="match status" value="1"/>
</dbReference>
<name>RU17_SCHPO</name>
<organism>
    <name type="scientific">Schizosaccharomyces pombe (strain 972 / ATCC 24843)</name>
    <name type="common">Fission yeast</name>
    <dbReference type="NCBI Taxonomy" id="284812"/>
    <lineage>
        <taxon>Eukaryota</taxon>
        <taxon>Fungi</taxon>
        <taxon>Dikarya</taxon>
        <taxon>Ascomycota</taxon>
        <taxon>Taphrinomycotina</taxon>
        <taxon>Schizosaccharomycetes</taxon>
        <taxon>Schizosaccharomycetales</taxon>
        <taxon>Schizosaccharomycetaceae</taxon>
        <taxon>Schizosaccharomyces</taxon>
    </lineage>
</organism>
<reference evidence="7" key="1">
    <citation type="journal article" date="2002" name="Nature">
        <title>The genome sequence of Schizosaccharomyces pombe.</title>
        <authorList>
            <person name="Wood V."/>
            <person name="Gwilliam R."/>
            <person name="Rajandream M.A."/>
            <person name="Lyne M.H."/>
            <person name="Lyne R."/>
            <person name="Stewart A."/>
            <person name="Sgouros J.G."/>
            <person name="Peat N."/>
            <person name="Hayles J."/>
            <person name="Baker S.G."/>
            <person name="Basham D."/>
            <person name="Bowman S."/>
            <person name="Brooks K."/>
            <person name="Brown D."/>
            <person name="Brown S."/>
            <person name="Chillingworth T."/>
            <person name="Churcher C.M."/>
            <person name="Collins M."/>
            <person name="Connor R."/>
            <person name="Cronin A."/>
            <person name="Davis P."/>
            <person name="Feltwell T."/>
            <person name="Fraser A."/>
            <person name="Gentles S."/>
            <person name="Goble A."/>
            <person name="Hamlin N."/>
            <person name="Harris D.E."/>
            <person name="Hidalgo J."/>
            <person name="Hodgson G."/>
            <person name="Holroyd S."/>
            <person name="Hornsby T."/>
            <person name="Howarth S."/>
            <person name="Huckle E.J."/>
            <person name="Hunt S."/>
            <person name="Jagels K."/>
            <person name="James K.D."/>
            <person name="Jones L."/>
            <person name="Jones M."/>
            <person name="Leather S."/>
            <person name="McDonald S."/>
            <person name="McLean J."/>
            <person name="Mooney P."/>
            <person name="Moule S."/>
            <person name="Mungall K.L."/>
            <person name="Murphy L.D."/>
            <person name="Niblett D."/>
            <person name="Odell C."/>
            <person name="Oliver K."/>
            <person name="O'Neil S."/>
            <person name="Pearson D."/>
            <person name="Quail M.A."/>
            <person name="Rabbinowitsch E."/>
            <person name="Rutherford K.M."/>
            <person name="Rutter S."/>
            <person name="Saunders D."/>
            <person name="Seeger K."/>
            <person name="Sharp S."/>
            <person name="Skelton J."/>
            <person name="Simmonds M.N."/>
            <person name="Squares R."/>
            <person name="Squares S."/>
            <person name="Stevens K."/>
            <person name="Taylor K."/>
            <person name="Taylor R.G."/>
            <person name="Tivey A."/>
            <person name="Walsh S.V."/>
            <person name="Warren T."/>
            <person name="Whitehead S."/>
            <person name="Woodward J.R."/>
            <person name="Volckaert G."/>
            <person name="Aert R."/>
            <person name="Robben J."/>
            <person name="Grymonprez B."/>
            <person name="Weltjens I."/>
            <person name="Vanstreels E."/>
            <person name="Rieger M."/>
            <person name="Schaefer M."/>
            <person name="Mueller-Auer S."/>
            <person name="Gabel C."/>
            <person name="Fuchs M."/>
            <person name="Duesterhoeft A."/>
            <person name="Fritzc C."/>
            <person name="Holzer E."/>
            <person name="Moestl D."/>
            <person name="Hilbert H."/>
            <person name="Borzym K."/>
            <person name="Langer I."/>
            <person name="Beck A."/>
            <person name="Lehrach H."/>
            <person name="Reinhardt R."/>
            <person name="Pohl T.M."/>
            <person name="Eger P."/>
            <person name="Zimmermann W."/>
            <person name="Wedler H."/>
            <person name="Wambutt R."/>
            <person name="Purnelle B."/>
            <person name="Goffeau A."/>
            <person name="Cadieu E."/>
            <person name="Dreano S."/>
            <person name="Gloux S."/>
            <person name="Lelaure V."/>
            <person name="Mottier S."/>
            <person name="Galibert F."/>
            <person name="Aves S.J."/>
            <person name="Xiang Z."/>
            <person name="Hunt C."/>
            <person name="Moore K."/>
            <person name="Hurst S.M."/>
            <person name="Lucas M."/>
            <person name="Rochet M."/>
            <person name="Gaillardin C."/>
            <person name="Tallada V.A."/>
            <person name="Garzon A."/>
            <person name="Thode G."/>
            <person name="Daga R.R."/>
            <person name="Cruzado L."/>
            <person name="Jimenez J."/>
            <person name="Sanchez M."/>
            <person name="del Rey F."/>
            <person name="Benito J."/>
            <person name="Dominguez A."/>
            <person name="Revuelta J.L."/>
            <person name="Moreno S."/>
            <person name="Armstrong J."/>
            <person name="Forsburg S.L."/>
            <person name="Cerutti L."/>
            <person name="Lowe T."/>
            <person name="McCombie W.R."/>
            <person name="Paulsen I."/>
            <person name="Potashkin J."/>
            <person name="Shpakovski G.V."/>
            <person name="Ussery D."/>
            <person name="Barrell B.G."/>
            <person name="Nurse P."/>
        </authorList>
    </citation>
    <scope>NUCLEOTIDE SEQUENCE [LARGE SCALE GENOMIC DNA]</scope>
    <source>
        <strain>972 / ATCC 24843</strain>
    </source>
</reference>
<reference evidence="6" key="2">
    <citation type="journal article" date="2006" name="Nat. Biotechnol.">
        <title>ORFeome cloning and global analysis of protein localization in the fission yeast Schizosaccharomyces pombe.</title>
        <authorList>
            <person name="Matsuyama A."/>
            <person name="Arai R."/>
            <person name="Yashiroda Y."/>
            <person name="Shirai A."/>
            <person name="Kamata A."/>
            <person name="Sekido S."/>
            <person name="Kobayashi Y."/>
            <person name="Hashimoto A."/>
            <person name="Hamamoto M."/>
            <person name="Hiraoka Y."/>
            <person name="Horinouchi S."/>
            <person name="Yoshida M."/>
        </authorList>
    </citation>
    <scope>SUBCELLULAR LOCATION [LARGE SCALE ANALYSIS]</scope>
</reference>
<reference evidence="6" key="3">
    <citation type="journal article" date="2007" name="Nucleic Acids Res.">
        <title>Proteomic analysis of the U1 snRNP of Schizosaccharomyces pombe reveals three essential organism-specific proteins.</title>
        <authorList>
            <person name="Newo A.N.S."/>
            <person name="Luetzelberger M."/>
            <person name="Bottner C.A."/>
            <person name="Wehland J."/>
            <person name="Wissing J."/>
            <person name="Jaensch L."/>
            <person name="Kaeufer N.F."/>
        </authorList>
    </citation>
    <scope>FUNCTION</scope>
    <scope>IDENTIFICATION IN U1 SNRNP COMPLEX</scope>
    <scope>IDENTIFICATION BY MASS SPECTROMETRY</scope>
    <scope>INTERACTION WITH U1 SNRNA</scope>
</reference>
<proteinExistence type="evidence at protein level"/>
<sequence>MAEKLPAPLLALFAPRPPLRYLPPMDVPPEKRSTPRVSGIAKYLKYAQSHDQQYHPTESLEEKRLRLRDEKQKQQRERLRSMIKVWDPDHDRHVIGDPYKTMFLSRLSYDTKESDIEREFTRYGPIERIRVVRNKVTGKSMGYAFVVFERERDLKVAYKASAGLMLNGRRIVVDVERGRTVKGWLPRKLGGGLGGRHYTKERPRRERGSRFRGDSGFRGGYRGGFRKSSGGGSRFGRGPTRSSHSSDYGGRDSSPKRRRYN</sequence>
<gene>
    <name evidence="7" type="primary">usp101</name>
    <name evidence="7" type="synonym">snp1</name>
    <name type="ORF">SPAC19A8.13</name>
</gene>
<feature type="chain" id="PRO_0000339243" description="U1 small nuclear ribonucleoprotein 70 kDa homolog">
    <location>
        <begin position="1"/>
        <end position="261"/>
    </location>
</feature>
<feature type="domain" description="RRM" evidence="2">
    <location>
        <begin position="100"/>
        <end position="178"/>
    </location>
</feature>
<feature type="region of interest" description="Disordered" evidence="3">
    <location>
        <begin position="192"/>
        <end position="261"/>
    </location>
</feature>
<feature type="compositionally biased region" description="Basic and acidic residues" evidence="3">
    <location>
        <begin position="198"/>
        <end position="215"/>
    </location>
</feature>
<feature type="compositionally biased region" description="Gly residues" evidence="3">
    <location>
        <begin position="216"/>
        <end position="235"/>
    </location>
</feature>
<protein>
    <recommendedName>
        <fullName>U1 small nuclear ribonucleoprotein 70 kDa homolog</fullName>
        <shortName>U1 70K</shortName>
        <shortName>U1 snRNP 70 kDa homolog</shortName>
        <shortName>U1-70K</shortName>
    </recommendedName>
    <alternativeName>
        <fullName>U1 small nuclear ribonucleoprotein usp101</fullName>
        <shortName>U1 snRNP protein usp101</shortName>
    </alternativeName>
</protein>
<accession>O13829</accession>
<comment type="function">
    <text evidence="1 5">Involved in nuclear mRNA splicing (By similarity). Essential for growth.</text>
</comment>
<comment type="subunit">
    <text evidence="5">Component of the spliceosome, where it is associated with snRNP U1. Associates with U1 snRNA.</text>
</comment>
<comment type="subcellular location">
    <subcellularLocation>
        <location evidence="4">Nucleus</location>
    </subcellularLocation>
</comment>